<protein>
    <recommendedName>
        <fullName evidence="1">Protein Syd</fullName>
    </recommendedName>
</protein>
<evidence type="ECO:0000255" key="1">
    <source>
        <dbReference type="HAMAP-Rule" id="MF_01104"/>
    </source>
</evidence>
<proteinExistence type="inferred from homology"/>
<gene>
    <name evidence="1" type="primary">syd</name>
    <name type="ordered locus">VF_0599</name>
</gene>
<organism>
    <name type="scientific">Aliivibrio fischeri (strain ATCC 700601 / ES114)</name>
    <name type="common">Vibrio fischeri</name>
    <dbReference type="NCBI Taxonomy" id="312309"/>
    <lineage>
        <taxon>Bacteria</taxon>
        <taxon>Pseudomonadati</taxon>
        <taxon>Pseudomonadota</taxon>
        <taxon>Gammaproteobacteria</taxon>
        <taxon>Vibrionales</taxon>
        <taxon>Vibrionaceae</taxon>
        <taxon>Aliivibrio</taxon>
    </lineage>
</organism>
<comment type="function">
    <text evidence="1">Interacts with the SecY protein in vivo. May bind preferentially to an uncomplexed state of SecY, thus functioning either as a chelating agent for excess SecY in the cell or as a regulatory factor that negatively controls the translocase function.</text>
</comment>
<comment type="subcellular location">
    <subcellularLocation>
        <location evidence="1">Cell inner membrane</location>
        <topology evidence="1">Peripheral membrane protein</topology>
        <orientation evidence="1">Cytoplasmic side</orientation>
    </subcellularLocation>
    <text evidence="1">Loosely associated with the cytoplasmic side of the inner membrane, probably via SecY.</text>
</comment>
<comment type="similarity">
    <text evidence="1">Belongs to the Syd family.</text>
</comment>
<reference key="1">
    <citation type="journal article" date="2005" name="Proc. Natl. Acad. Sci. U.S.A.">
        <title>Complete genome sequence of Vibrio fischeri: a symbiotic bacterium with pathogenic congeners.</title>
        <authorList>
            <person name="Ruby E.G."/>
            <person name="Urbanowski M."/>
            <person name="Campbell J."/>
            <person name="Dunn A."/>
            <person name="Faini M."/>
            <person name="Gunsalus R."/>
            <person name="Lostroh P."/>
            <person name="Lupp C."/>
            <person name="McCann J."/>
            <person name="Millikan D."/>
            <person name="Schaefer A."/>
            <person name="Stabb E."/>
            <person name="Stevens A."/>
            <person name="Visick K."/>
            <person name="Whistler C."/>
            <person name="Greenberg E.P."/>
        </authorList>
    </citation>
    <scope>NUCLEOTIDE SEQUENCE [LARGE SCALE GENOMIC DNA]</scope>
    <source>
        <strain>ATCC 700601 / ES114</strain>
    </source>
</reference>
<accession>Q5E7A2</accession>
<sequence length="183" mass="20841">MPLSVEQALANFSQRYVEAWKAQHDCLPINEELVGLASPCIEETRDLEISWQPIVRDEAIRLHNIEQGIELDLHDDFHAFYGTQYSADMTAKFEDMNIELLQVWSDEDLERLQGNMLGHLVMQRRLKLVPTLFVAVTDDEMEVVSICNQSGEVILDRVGTKNRTVLAANMAEFLNKLEPVIAA</sequence>
<keyword id="KW-0997">Cell inner membrane</keyword>
<keyword id="KW-1003">Cell membrane</keyword>
<keyword id="KW-0472">Membrane</keyword>
<keyword id="KW-1185">Reference proteome</keyword>
<name>SYDP_ALIF1</name>
<feature type="chain" id="PRO_0000214147" description="Protein Syd">
    <location>
        <begin position="1"/>
        <end position="183"/>
    </location>
</feature>
<dbReference type="EMBL" id="CP000020">
    <property type="protein sequence ID" value="AAW85094.1"/>
    <property type="molecule type" value="Genomic_DNA"/>
</dbReference>
<dbReference type="RefSeq" id="WP_005417891.1">
    <property type="nucleotide sequence ID" value="NZ_CAWLES010000001.1"/>
</dbReference>
<dbReference type="RefSeq" id="YP_203982.1">
    <property type="nucleotide sequence ID" value="NC_006840.2"/>
</dbReference>
<dbReference type="SMR" id="Q5E7A2"/>
<dbReference type="STRING" id="312309.VF_0599"/>
<dbReference type="EnsemblBacteria" id="AAW85094">
    <property type="protein sequence ID" value="AAW85094"/>
    <property type="gene ID" value="VF_0599"/>
</dbReference>
<dbReference type="GeneID" id="54163252"/>
<dbReference type="KEGG" id="vfi:VF_0599"/>
<dbReference type="PATRIC" id="fig|312309.11.peg.591"/>
<dbReference type="eggNOG" id="ENOG502ZCMR">
    <property type="taxonomic scope" value="Bacteria"/>
</dbReference>
<dbReference type="HOGENOM" id="CLU_121866_0_0_6"/>
<dbReference type="OrthoDB" id="5599437at2"/>
<dbReference type="Proteomes" id="UP000000537">
    <property type="component" value="Chromosome I"/>
</dbReference>
<dbReference type="GO" id="GO:0009898">
    <property type="term" value="C:cytoplasmic side of plasma membrane"/>
    <property type="evidence" value="ECO:0007669"/>
    <property type="project" value="InterPro"/>
</dbReference>
<dbReference type="CDD" id="cd16323">
    <property type="entry name" value="Syd"/>
    <property type="match status" value="1"/>
</dbReference>
<dbReference type="Gene3D" id="3.40.1580.20">
    <property type="entry name" value="Syd protein"/>
    <property type="match status" value="1"/>
</dbReference>
<dbReference type="HAMAP" id="MF_01104">
    <property type="entry name" value="Syd"/>
    <property type="match status" value="1"/>
</dbReference>
<dbReference type="InterPro" id="IPR009948">
    <property type="entry name" value="Syd"/>
</dbReference>
<dbReference type="InterPro" id="IPR038228">
    <property type="entry name" value="Syd_sf"/>
</dbReference>
<dbReference type="NCBIfam" id="NF003439">
    <property type="entry name" value="PRK04968.1"/>
    <property type="match status" value="1"/>
</dbReference>
<dbReference type="Pfam" id="PF07348">
    <property type="entry name" value="Syd"/>
    <property type="match status" value="1"/>
</dbReference>